<reference key="1">
    <citation type="journal article" date="2006" name="J. Bacteriol.">
        <title>Chromosome rearrangement and diversification of Francisella tularensis revealed by the type B (OSU18) genome sequence.</title>
        <authorList>
            <person name="Petrosino J.F."/>
            <person name="Xiang Q."/>
            <person name="Karpathy S.E."/>
            <person name="Jiang H."/>
            <person name="Yerrapragada S."/>
            <person name="Liu Y."/>
            <person name="Gioia J."/>
            <person name="Hemphill L."/>
            <person name="Gonzalez A."/>
            <person name="Raghavan T.M."/>
            <person name="Uzman A."/>
            <person name="Fox G.E."/>
            <person name="Highlander S."/>
            <person name="Reichard M."/>
            <person name="Morton R.J."/>
            <person name="Clinkenbeard K.D."/>
            <person name="Weinstock G.M."/>
        </authorList>
    </citation>
    <scope>NUCLEOTIDE SEQUENCE [LARGE SCALE GENOMIC DNA]</scope>
    <source>
        <strain>OSU18</strain>
    </source>
</reference>
<feature type="chain" id="PRO_0000300912" description="Glutamate-1-semialdehyde 2,1-aminomutase">
    <location>
        <begin position="1"/>
        <end position="431"/>
    </location>
</feature>
<feature type="modified residue" description="N6-(pyridoxal phosphate)lysine" evidence="1">
    <location>
        <position position="269"/>
    </location>
</feature>
<evidence type="ECO:0000255" key="1">
    <source>
        <dbReference type="HAMAP-Rule" id="MF_00375"/>
    </source>
</evidence>
<proteinExistence type="inferred from homology"/>
<gene>
    <name evidence="1" type="primary">hemL</name>
    <name type="ordered locus">FTH_1255</name>
</gene>
<comment type="catalytic activity">
    <reaction evidence="1">
        <text>(S)-4-amino-5-oxopentanoate = 5-aminolevulinate</text>
        <dbReference type="Rhea" id="RHEA:14265"/>
        <dbReference type="ChEBI" id="CHEBI:57501"/>
        <dbReference type="ChEBI" id="CHEBI:356416"/>
        <dbReference type="EC" id="5.4.3.8"/>
    </reaction>
</comment>
<comment type="cofactor">
    <cofactor evidence="1">
        <name>pyridoxal 5'-phosphate</name>
        <dbReference type="ChEBI" id="CHEBI:597326"/>
    </cofactor>
</comment>
<comment type="pathway">
    <text evidence="1">Porphyrin-containing compound metabolism; protoporphyrin-IX biosynthesis; 5-aminolevulinate from L-glutamyl-tRNA(Glu): step 2/2.</text>
</comment>
<comment type="subunit">
    <text evidence="1">Homodimer.</text>
</comment>
<comment type="subcellular location">
    <subcellularLocation>
        <location evidence="1">Cytoplasm</location>
    </subcellularLocation>
</comment>
<comment type="similarity">
    <text evidence="1">Belongs to the class-III pyridoxal-phosphate-dependent aminotransferase family. HemL subfamily.</text>
</comment>
<organism>
    <name type="scientific">Francisella tularensis subsp. holarctica (strain OSU18)</name>
    <dbReference type="NCBI Taxonomy" id="393011"/>
    <lineage>
        <taxon>Bacteria</taxon>
        <taxon>Pseudomonadati</taxon>
        <taxon>Pseudomonadota</taxon>
        <taxon>Gammaproteobacteria</taxon>
        <taxon>Thiotrichales</taxon>
        <taxon>Francisellaceae</taxon>
        <taxon>Francisella</taxon>
    </lineage>
</organism>
<protein>
    <recommendedName>
        <fullName evidence="1">Glutamate-1-semialdehyde 2,1-aminomutase</fullName>
        <shortName evidence="1">GSA</shortName>
        <ecNumber evidence="1">5.4.3.8</ecNumber>
    </recommendedName>
    <alternativeName>
        <fullName evidence="1">Glutamate-1-semialdehyde aminotransferase</fullName>
        <shortName evidence="1">GSA-AT</shortName>
    </alternativeName>
</protein>
<keyword id="KW-0963">Cytoplasm</keyword>
<keyword id="KW-0413">Isomerase</keyword>
<keyword id="KW-0627">Porphyrin biosynthesis</keyword>
<keyword id="KW-0663">Pyridoxal phosphate</keyword>
<sequence length="431" mass="47036">MENKSNSQILFAEAQQYIPGGVNSPVRAFKSVGQEFPRFIKFAKGAYLYDVDWNKYIDYIGSWGPMILGHCDDDVLEAIQCQVKNGLSYGAPCKQEVDLAKKIIELMPNIEQVRFVNSGTEATISAIRLARAYTCRNKIIKFEGCYHGHADEFLVAAGSGALSLGQPNSPGVPEDVVKDTLVASFNDMESIQALFEKYKDEIACIIVEPIAGNMNMIFPQDGFLAKLRAICDQNSSLLIFDEVMTGFRVALGGAQSIYNVKPDLTTLGKVIGGGMPVGAFGGRKEIMQKVSPAGPVYQAGTLSGNPIAMTAGIKTLEKISQPGFFDELGAKAQKLVDGLNEAAKAYDFNFHAKCLGGMFGLFFCSDKIAVNTFVDLGKTNLKMFNQFFAYMLDNGVYLAPSAYEAGFISIAHSDEDIEKTICLAKKFFQEN</sequence>
<name>GSA_FRATO</name>
<accession>Q0BLC7</accession>
<dbReference type="EC" id="5.4.3.8" evidence="1"/>
<dbReference type="EMBL" id="CP000437">
    <property type="protein sequence ID" value="ABI83107.1"/>
    <property type="molecule type" value="Genomic_DNA"/>
</dbReference>
<dbReference type="RefSeq" id="WP_010031613.1">
    <property type="nucleotide sequence ID" value="NC_017463.1"/>
</dbReference>
<dbReference type="SMR" id="Q0BLC7"/>
<dbReference type="KEGG" id="fth:FTH_1255"/>
<dbReference type="UniPathway" id="UPA00251">
    <property type="reaction ID" value="UER00317"/>
</dbReference>
<dbReference type="GO" id="GO:0005737">
    <property type="term" value="C:cytoplasm"/>
    <property type="evidence" value="ECO:0007669"/>
    <property type="project" value="UniProtKB-SubCell"/>
</dbReference>
<dbReference type="GO" id="GO:0042286">
    <property type="term" value="F:glutamate-1-semialdehyde 2,1-aminomutase activity"/>
    <property type="evidence" value="ECO:0007669"/>
    <property type="project" value="UniProtKB-UniRule"/>
</dbReference>
<dbReference type="GO" id="GO:0030170">
    <property type="term" value="F:pyridoxal phosphate binding"/>
    <property type="evidence" value="ECO:0007669"/>
    <property type="project" value="InterPro"/>
</dbReference>
<dbReference type="GO" id="GO:0008483">
    <property type="term" value="F:transaminase activity"/>
    <property type="evidence" value="ECO:0007669"/>
    <property type="project" value="InterPro"/>
</dbReference>
<dbReference type="GO" id="GO:0006782">
    <property type="term" value="P:protoporphyrinogen IX biosynthetic process"/>
    <property type="evidence" value="ECO:0007669"/>
    <property type="project" value="UniProtKB-UniRule"/>
</dbReference>
<dbReference type="CDD" id="cd00610">
    <property type="entry name" value="OAT_like"/>
    <property type="match status" value="1"/>
</dbReference>
<dbReference type="FunFam" id="3.40.640.10:FF:000021">
    <property type="entry name" value="Glutamate-1-semialdehyde 2,1-aminomutase"/>
    <property type="match status" value="1"/>
</dbReference>
<dbReference type="Gene3D" id="3.90.1150.10">
    <property type="entry name" value="Aspartate Aminotransferase, domain 1"/>
    <property type="match status" value="1"/>
</dbReference>
<dbReference type="Gene3D" id="3.40.640.10">
    <property type="entry name" value="Type I PLP-dependent aspartate aminotransferase-like (Major domain)"/>
    <property type="match status" value="1"/>
</dbReference>
<dbReference type="HAMAP" id="MF_00375">
    <property type="entry name" value="HemL_aminotrans_3"/>
    <property type="match status" value="1"/>
</dbReference>
<dbReference type="InterPro" id="IPR004639">
    <property type="entry name" value="4pyrrol_synth_GluAld_NH2Trfase"/>
</dbReference>
<dbReference type="InterPro" id="IPR005814">
    <property type="entry name" value="Aminotrans_3"/>
</dbReference>
<dbReference type="InterPro" id="IPR049704">
    <property type="entry name" value="Aminotrans_3_PPA_site"/>
</dbReference>
<dbReference type="InterPro" id="IPR015424">
    <property type="entry name" value="PyrdxlP-dep_Trfase"/>
</dbReference>
<dbReference type="InterPro" id="IPR015421">
    <property type="entry name" value="PyrdxlP-dep_Trfase_major"/>
</dbReference>
<dbReference type="InterPro" id="IPR015422">
    <property type="entry name" value="PyrdxlP-dep_Trfase_small"/>
</dbReference>
<dbReference type="NCBIfam" id="TIGR00713">
    <property type="entry name" value="hemL"/>
    <property type="match status" value="1"/>
</dbReference>
<dbReference type="NCBIfam" id="NF000818">
    <property type="entry name" value="PRK00062.1"/>
    <property type="match status" value="1"/>
</dbReference>
<dbReference type="PANTHER" id="PTHR43713">
    <property type="entry name" value="GLUTAMATE-1-SEMIALDEHYDE 2,1-AMINOMUTASE"/>
    <property type="match status" value="1"/>
</dbReference>
<dbReference type="PANTHER" id="PTHR43713:SF3">
    <property type="entry name" value="GLUTAMATE-1-SEMIALDEHYDE 2,1-AMINOMUTASE 1, CHLOROPLASTIC-RELATED"/>
    <property type="match status" value="1"/>
</dbReference>
<dbReference type="Pfam" id="PF00202">
    <property type="entry name" value="Aminotran_3"/>
    <property type="match status" value="1"/>
</dbReference>
<dbReference type="SUPFAM" id="SSF53383">
    <property type="entry name" value="PLP-dependent transferases"/>
    <property type="match status" value="1"/>
</dbReference>
<dbReference type="PROSITE" id="PS00600">
    <property type="entry name" value="AA_TRANSFER_CLASS_3"/>
    <property type="match status" value="1"/>
</dbReference>